<protein>
    <recommendedName>
        <fullName evidence="1">L-lactate dehydrogenase</fullName>
        <shortName evidence="1">L-LDH</shortName>
        <ecNumber evidence="1">1.1.1.27</ecNumber>
    </recommendedName>
</protein>
<reference key="1">
    <citation type="submission" date="2008-05" db="EMBL/GenBank/DDBJ databases">
        <title>Genome sequence of Clostridium botulinum Ba4 strain 657.</title>
        <authorList>
            <person name="Shrivastava S."/>
            <person name="Brown J.L."/>
            <person name="Bruce D."/>
            <person name="Detter C."/>
            <person name="Munk C."/>
            <person name="Smith L.A."/>
            <person name="Smith T.J."/>
            <person name="Sutton G."/>
            <person name="Brettin T.S."/>
        </authorList>
    </citation>
    <scope>NUCLEOTIDE SEQUENCE [LARGE SCALE GENOMIC DNA]</scope>
    <source>
        <strain>657 / Type Ba4</strain>
    </source>
</reference>
<evidence type="ECO:0000255" key="1">
    <source>
        <dbReference type="HAMAP-Rule" id="MF_00488"/>
    </source>
</evidence>
<organism>
    <name type="scientific">Clostridium botulinum (strain 657 / Type Ba4)</name>
    <dbReference type="NCBI Taxonomy" id="515621"/>
    <lineage>
        <taxon>Bacteria</taxon>
        <taxon>Bacillati</taxon>
        <taxon>Bacillota</taxon>
        <taxon>Clostridia</taxon>
        <taxon>Eubacteriales</taxon>
        <taxon>Clostridiaceae</taxon>
        <taxon>Clostridium</taxon>
    </lineage>
</organism>
<dbReference type="EC" id="1.1.1.27" evidence="1"/>
<dbReference type="EMBL" id="CP001083">
    <property type="protein sequence ID" value="ACQ53261.1"/>
    <property type="molecule type" value="Genomic_DNA"/>
</dbReference>
<dbReference type="RefSeq" id="WP_003360745.1">
    <property type="nucleotide sequence ID" value="NC_012658.1"/>
</dbReference>
<dbReference type="SMR" id="C3KVF0"/>
<dbReference type="KEGG" id="cbi:CLJ_B1617"/>
<dbReference type="HOGENOM" id="CLU_045401_1_1_9"/>
<dbReference type="UniPathway" id="UPA00554">
    <property type="reaction ID" value="UER00611"/>
</dbReference>
<dbReference type="Proteomes" id="UP000002333">
    <property type="component" value="Chromosome"/>
</dbReference>
<dbReference type="GO" id="GO:0005737">
    <property type="term" value="C:cytoplasm"/>
    <property type="evidence" value="ECO:0007669"/>
    <property type="project" value="UniProtKB-SubCell"/>
</dbReference>
<dbReference type="GO" id="GO:0004459">
    <property type="term" value="F:L-lactate dehydrogenase activity"/>
    <property type="evidence" value="ECO:0007669"/>
    <property type="project" value="UniProtKB-UniRule"/>
</dbReference>
<dbReference type="GO" id="GO:0006096">
    <property type="term" value="P:glycolytic process"/>
    <property type="evidence" value="ECO:0007669"/>
    <property type="project" value="UniProtKB-UniRule"/>
</dbReference>
<dbReference type="GO" id="GO:0006089">
    <property type="term" value="P:lactate metabolic process"/>
    <property type="evidence" value="ECO:0007669"/>
    <property type="project" value="TreeGrafter"/>
</dbReference>
<dbReference type="CDD" id="cd05292">
    <property type="entry name" value="LDH_2"/>
    <property type="match status" value="1"/>
</dbReference>
<dbReference type="FunFam" id="3.40.50.720:FF:000018">
    <property type="entry name" value="Malate dehydrogenase"/>
    <property type="match status" value="1"/>
</dbReference>
<dbReference type="Gene3D" id="3.90.110.10">
    <property type="entry name" value="Lactate dehydrogenase/glycoside hydrolase, family 4, C-terminal"/>
    <property type="match status" value="1"/>
</dbReference>
<dbReference type="Gene3D" id="3.40.50.720">
    <property type="entry name" value="NAD(P)-binding Rossmann-like Domain"/>
    <property type="match status" value="1"/>
</dbReference>
<dbReference type="HAMAP" id="MF_00488">
    <property type="entry name" value="Lactate_dehydrog"/>
    <property type="match status" value="1"/>
</dbReference>
<dbReference type="InterPro" id="IPR001557">
    <property type="entry name" value="L-lactate/malate_DH"/>
</dbReference>
<dbReference type="InterPro" id="IPR011304">
    <property type="entry name" value="L-lactate_DH"/>
</dbReference>
<dbReference type="InterPro" id="IPR018177">
    <property type="entry name" value="L-lactate_DH_AS"/>
</dbReference>
<dbReference type="InterPro" id="IPR022383">
    <property type="entry name" value="Lactate/malate_DH_C"/>
</dbReference>
<dbReference type="InterPro" id="IPR001236">
    <property type="entry name" value="Lactate/malate_DH_N"/>
</dbReference>
<dbReference type="InterPro" id="IPR015955">
    <property type="entry name" value="Lactate_DH/Glyco_Ohase_4_C"/>
</dbReference>
<dbReference type="InterPro" id="IPR036291">
    <property type="entry name" value="NAD(P)-bd_dom_sf"/>
</dbReference>
<dbReference type="NCBIfam" id="TIGR01771">
    <property type="entry name" value="L-LDH-NAD"/>
    <property type="match status" value="1"/>
</dbReference>
<dbReference type="NCBIfam" id="NF000824">
    <property type="entry name" value="PRK00066.1"/>
    <property type="match status" value="1"/>
</dbReference>
<dbReference type="NCBIfam" id="NF004863">
    <property type="entry name" value="PRK06223.1"/>
    <property type="match status" value="1"/>
</dbReference>
<dbReference type="PANTHER" id="PTHR43128">
    <property type="entry name" value="L-2-HYDROXYCARBOXYLATE DEHYDROGENASE (NAD(P)(+))"/>
    <property type="match status" value="1"/>
</dbReference>
<dbReference type="PANTHER" id="PTHR43128:SF16">
    <property type="entry name" value="L-LACTATE DEHYDROGENASE"/>
    <property type="match status" value="1"/>
</dbReference>
<dbReference type="Pfam" id="PF02866">
    <property type="entry name" value="Ldh_1_C"/>
    <property type="match status" value="1"/>
</dbReference>
<dbReference type="Pfam" id="PF00056">
    <property type="entry name" value="Ldh_1_N"/>
    <property type="match status" value="1"/>
</dbReference>
<dbReference type="PIRSF" id="PIRSF000102">
    <property type="entry name" value="Lac_mal_DH"/>
    <property type="match status" value="1"/>
</dbReference>
<dbReference type="PRINTS" id="PR00086">
    <property type="entry name" value="LLDHDRGNASE"/>
</dbReference>
<dbReference type="SUPFAM" id="SSF56327">
    <property type="entry name" value="LDH C-terminal domain-like"/>
    <property type="match status" value="1"/>
</dbReference>
<dbReference type="SUPFAM" id="SSF51735">
    <property type="entry name" value="NAD(P)-binding Rossmann-fold domains"/>
    <property type="match status" value="1"/>
</dbReference>
<dbReference type="PROSITE" id="PS00064">
    <property type="entry name" value="L_LDH"/>
    <property type="match status" value="1"/>
</dbReference>
<accession>C3KVF0</accession>
<sequence length="318" mass="34689">MIKKRNTTKISVIGAGSVGATTAYALMLSGVATEIVLVDVNKAKTEGEAMDLSHGADFVQPVNILSGDYKDTESSDIVVITAGAAQKVGETRLQLINKNINIFKSIIPEVVKYNKDAILLVVSNPVDVLSYVTYKLSGFPKERVIGSGTVLDTSRLKHEIGKRYKIDPRNVNTYIMGEHGDSEIATWSVTNIQNIKIDEYANKENLEYNDNFRKEVYENVKNAAYEVINRKGATFYAIALAVTRIVKAILGDEKTILPVSTLVENYYGIKDVYLGMPCIVGGSGVEKALSIDLNKTEASKLVKSAETLKNTLNNASGL</sequence>
<comment type="function">
    <text evidence="1">Catalyzes the conversion of lactate to pyruvate.</text>
</comment>
<comment type="catalytic activity">
    <reaction evidence="1">
        <text>(S)-lactate + NAD(+) = pyruvate + NADH + H(+)</text>
        <dbReference type="Rhea" id="RHEA:23444"/>
        <dbReference type="ChEBI" id="CHEBI:15361"/>
        <dbReference type="ChEBI" id="CHEBI:15378"/>
        <dbReference type="ChEBI" id="CHEBI:16651"/>
        <dbReference type="ChEBI" id="CHEBI:57540"/>
        <dbReference type="ChEBI" id="CHEBI:57945"/>
        <dbReference type="EC" id="1.1.1.27"/>
    </reaction>
</comment>
<comment type="pathway">
    <text evidence="1">Fermentation; pyruvate fermentation to lactate; (S)-lactate from pyruvate: step 1/1.</text>
</comment>
<comment type="subunit">
    <text evidence="1">Homotetramer.</text>
</comment>
<comment type="subcellular location">
    <subcellularLocation>
        <location evidence="1">Cytoplasm</location>
    </subcellularLocation>
</comment>
<comment type="similarity">
    <text evidence="1">Belongs to the LDH/MDH superfamily. LDH family.</text>
</comment>
<proteinExistence type="inferred from homology"/>
<gene>
    <name evidence="1" type="primary">ldh</name>
    <name type="ordered locus">CLJ_B1617</name>
</gene>
<keyword id="KW-0963">Cytoplasm</keyword>
<keyword id="KW-0520">NAD</keyword>
<keyword id="KW-0560">Oxidoreductase</keyword>
<keyword id="KW-0597">Phosphoprotein</keyword>
<feature type="chain" id="PRO_1000206448" description="L-lactate dehydrogenase">
    <location>
        <begin position="1"/>
        <end position="318"/>
    </location>
</feature>
<feature type="active site" description="Proton acceptor" evidence="1">
    <location>
        <position position="179"/>
    </location>
</feature>
<feature type="binding site" evidence="1">
    <location>
        <position position="18"/>
    </location>
    <ligand>
        <name>NAD(+)</name>
        <dbReference type="ChEBI" id="CHEBI:57540"/>
    </ligand>
</feature>
<feature type="binding site" evidence="1">
    <location>
        <position position="39"/>
    </location>
    <ligand>
        <name>NAD(+)</name>
        <dbReference type="ChEBI" id="CHEBI:57540"/>
    </ligand>
</feature>
<feature type="binding site" evidence="1">
    <location>
        <position position="44"/>
    </location>
    <ligand>
        <name>NAD(+)</name>
        <dbReference type="ChEBI" id="CHEBI:57540"/>
    </ligand>
</feature>
<feature type="binding site" evidence="1">
    <location>
        <position position="69"/>
    </location>
    <ligand>
        <name>NAD(+)</name>
        <dbReference type="ChEBI" id="CHEBI:57540"/>
    </ligand>
</feature>
<feature type="binding site" evidence="1">
    <location>
        <begin position="83"/>
        <end position="84"/>
    </location>
    <ligand>
        <name>NAD(+)</name>
        <dbReference type="ChEBI" id="CHEBI:57540"/>
    </ligand>
</feature>
<feature type="binding site" evidence="1">
    <location>
        <position position="86"/>
    </location>
    <ligand>
        <name>substrate</name>
    </ligand>
</feature>
<feature type="binding site" evidence="1">
    <location>
        <position position="92"/>
    </location>
    <ligand>
        <name>substrate</name>
    </ligand>
</feature>
<feature type="binding site" evidence="1">
    <location>
        <position position="105"/>
    </location>
    <ligand>
        <name>NAD(+)</name>
        <dbReference type="ChEBI" id="CHEBI:57540"/>
    </ligand>
</feature>
<feature type="binding site" evidence="1">
    <location>
        <begin position="122"/>
        <end position="124"/>
    </location>
    <ligand>
        <name>NAD(+)</name>
        <dbReference type="ChEBI" id="CHEBI:57540"/>
    </ligand>
</feature>
<feature type="binding site" evidence="1">
    <location>
        <begin position="124"/>
        <end position="127"/>
    </location>
    <ligand>
        <name>substrate</name>
    </ligand>
</feature>
<feature type="binding site" evidence="1">
    <location>
        <position position="147"/>
    </location>
    <ligand>
        <name>NAD(+)</name>
        <dbReference type="ChEBI" id="CHEBI:57540"/>
    </ligand>
</feature>
<feature type="binding site" evidence="1">
    <location>
        <begin position="152"/>
        <end position="155"/>
    </location>
    <ligand>
        <name>substrate</name>
    </ligand>
</feature>
<feature type="binding site" evidence="1">
    <location>
        <position position="234"/>
    </location>
    <ligand>
        <name>substrate</name>
    </ligand>
</feature>
<feature type="modified residue" description="Phosphotyrosine" evidence="1">
    <location>
        <position position="225"/>
    </location>
</feature>
<name>LDH_CLOB6</name>